<name>ACPS_CUPTR</name>
<proteinExistence type="inferred from homology"/>
<organism>
    <name type="scientific">Cupriavidus taiwanensis (strain DSM 17343 / BCRC 17206 / CCUG 44338 / CIP 107171 / LMG 19424 / R1)</name>
    <name type="common">Ralstonia taiwanensis (strain LMG 19424)</name>
    <dbReference type="NCBI Taxonomy" id="977880"/>
    <lineage>
        <taxon>Bacteria</taxon>
        <taxon>Pseudomonadati</taxon>
        <taxon>Pseudomonadota</taxon>
        <taxon>Betaproteobacteria</taxon>
        <taxon>Burkholderiales</taxon>
        <taxon>Burkholderiaceae</taxon>
        <taxon>Cupriavidus</taxon>
    </lineage>
</organism>
<feature type="chain" id="PRO_1000093872" description="Holo-[acyl-carrier-protein] synthase">
    <location>
        <begin position="1"/>
        <end position="140"/>
    </location>
</feature>
<feature type="binding site" evidence="1">
    <location>
        <position position="8"/>
    </location>
    <ligand>
        <name>Mg(2+)</name>
        <dbReference type="ChEBI" id="CHEBI:18420"/>
    </ligand>
</feature>
<feature type="binding site" evidence="1">
    <location>
        <position position="62"/>
    </location>
    <ligand>
        <name>Mg(2+)</name>
        <dbReference type="ChEBI" id="CHEBI:18420"/>
    </ligand>
</feature>
<dbReference type="EC" id="2.7.8.7" evidence="1"/>
<dbReference type="EMBL" id="CU633749">
    <property type="protein sequence ID" value="CAQ69992.1"/>
    <property type="molecule type" value="Genomic_DNA"/>
</dbReference>
<dbReference type="RefSeq" id="WP_012353301.1">
    <property type="nucleotide sequence ID" value="NC_010528.1"/>
</dbReference>
<dbReference type="SMR" id="B3R1Z5"/>
<dbReference type="GeneID" id="29760310"/>
<dbReference type="KEGG" id="cti:RALTA_A2052"/>
<dbReference type="eggNOG" id="COG0736">
    <property type="taxonomic scope" value="Bacteria"/>
</dbReference>
<dbReference type="HOGENOM" id="CLU_089696_3_1_4"/>
<dbReference type="BioCyc" id="CTAI977880:RALTA_RS09965-MONOMER"/>
<dbReference type="Proteomes" id="UP000001692">
    <property type="component" value="Chromosome 1"/>
</dbReference>
<dbReference type="GO" id="GO:0005737">
    <property type="term" value="C:cytoplasm"/>
    <property type="evidence" value="ECO:0007669"/>
    <property type="project" value="UniProtKB-SubCell"/>
</dbReference>
<dbReference type="GO" id="GO:0008897">
    <property type="term" value="F:holo-[acyl-carrier-protein] synthase activity"/>
    <property type="evidence" value="ECO:0007669"/>
    <property type="project" value="UniProtKB-UniRule"/>
</dbReference>
<dbReference type="GO" id="GO:0000287">
    <property type="term" value="F:magnesium ion binding"/>
    <property type="evidence" value="ECO:0007669"/>
    <property type="project" value="UniProtKB-UniRule"/>
</dbReference>
<dbReference type="GO" id="GO:0006633">
    <property type="term" value="P:fatty acid biosynthetic process"/>
    <property type="evidence" value="ECO:0007669"/>
    <property type="project" value="UniProtKB-UniRule"/>
</dbReference>
<dbReference type="Gene3D" id="3.90.470.20">
    <property type="entry name" value="4'-phosphopantetheinyl transferase domain"/>
    <property type="match status" value="1"/>
</dbReference>
<dbReference type="HAMAP" id="MF_00101">
    <property type="entry name" value="AcpS"/>
    <property type="match status" value="1"/>
</dbReference>
<dbReference type="InterPro" id="IPR008278">
    <property type="entry name" value="4-PPantetheinyl_Trfase_dom"/>
</dbReference>
<dbReference type="InterPro" id="IPR037143">
    <property type="entry name" value="4-PPantetheinyl_Trfase_dom_sf"/>
</dbReference>
<dbReference type="InterPro" id="IPR002582">
    <property type="entry name" value="ACPS"/>
</dbReference>
<dbReference type="InterPro" id="IPR004568">
    <property type="entry name" value="Ppantetheine-prot_Trfase_dom"/>
</dbReference>
<dbReference type="NCBIfam" id="TIGR00516">
    <property type="entry name" value="acpS"/>
    <property type="match status" value="1"/>
</dbReference>
<dbReference type="NCBIfam" id="TIGR00556">
    <property type="entry name" value="pantethn_trn"/>
    <property type="match status" value="1"/>
</dbReference>
<dbReference type="Pfam" id="PF01648">
    <property type="entry name" value="ACPS"/>
    <property type="match status" value="1"/>
</dbReference>
<dbReference type="SUPFAM" id="SSF56214">
    <property type="entry name" value="4'-phosphopantetheinyl transferase"/>
    <property type="match status" value="1"/>
</dbReference>
<accession>B3R1Z5</accession>
<gene>
    <name evidence="1" type="primary">acpS</name>
    <name type="ordered locus">RALTA_A2052</name>
</gene>
<protein>
    <recommendedName>
        <fullName evidence="1">Holo-[acyl-carrier-protein] synthase</fullName>
        <shortName evidence="1">Holo-ACP synthase</shortName>
        <ecNumber evidence="1">2.7.8.7</ecNumber>
    </recommendedName>
    <alternativeName>
        <fullName evidence="1">4'-phosphopantetheinyl transferase AcpS</fullName>
    </alternativeName>
</protein>
<reference key="1">
    <citation type="journal article" date="2008" name="Genome Res.">
        <title>Genome sequence of the beta-rhizobium Cupriavidus taiwanensis and comparative genomics of rhizobia.</title>
        <authorList>
            <person name="Amadou C."/>
            <person name="Pascal G."/>
            <person name="Mangenot S."/>
            <person name="Glew M."/>
            <person name="Bontemps C."/>
            <person name="Capela D."/>
            <person name="Carrere S."/>
            <person name="Cruveiller S."/>
            <person name="Dossat C."/>
            <person name="Lajus A."/>
            <person name="Marchetti M."/>
            <person name="Poinsot V."/>
            <person name="Rouy Z."/>
            <person name="Servin B."/>
            <person name="Saad M."/>
            <person name="Schenowitz C."/>
            <person name="Barbe V."/>
            <person name="Batut J."/>
            <person name="Medigue C."/>
            <person name="Masson-Boivin C."/>
        </authorList>
    </citation>
    <scope>NUCLEOTIDE SEQUENCE [LARGE SCALE GENOMIC DNA]</scope>
    <source>
        <strain>DSM 17343 / BCRC 17206 / CCUG 44338 / CIP 107171 / LMG 19424 / R1</strain>
    </source>
</reference>
<comment type="function">
    <text evidence="1">Transfers the 4'-phosphopantetheine moiety from coenzyme A to a Ser of acyl-carrier-protein.</text>
</comment>
<comment type="catalytic activity">
    <reaction evidence="1">
        <text>apo-[ACP] + CoA = holo-[ACP] + adenosine 3',5'-bisphosphate + H(+)</text>
        <dbReference type="Rhea" id="RHEA:12068"/>
        <dbReference type="Rhea" id="RHEA-COMP:9685"/>
        <dbReference type="Rhea" id="RHEA-COMP:9690"/>
        <dbReference type="ChEBI" id="CHEBI:15378"/>
        <dbReference type="ChEBI" id="CHEBI:29999"/>
        <dbReference type="ChEBI" id="CHEBI:57287"/>
        <dbReference type="ChEBI" id="CHEBI:58343"/>
        <dbReference type="ChEBI" id="CHEBI:64479"/>
        <dbReference type="EC" id="2.7.8.7"/>
    </reaction>
</comment>
<comment type="cofactor">
    <cofactor evidence="1">
        <name>Mg(2+)</name>
        <dbReference type="ChEBI" id="CHEBI:18420"/>
    </cofactor>
</comment>
<comment type="subcellular location">
    <subcellularLocation>
        <location evidence="1">Cytoplasm</location>
    </subcellularLocation>
</comment>
<comment type="similarity">
    <text evidence="1">Belongs to the P-Pant transferase superfamily. AcpS family.</text>
</comment>
<sequence length="140" mass="15262">MIYGIGTDIIQIARVQGVMTRTNGRFAEKVLGPDELAKYHARKARSEKRGLAFLATRFAAKEAFSKAIGLGMRWPMTWRAMELMNLPSGEPTAVCHGELAAWLAERGLVVRVSVSDEHDYAVAFAIAERSGAAVSQPTAL</sequence>
<evidence type="ECO:0000255" key="1">
    <source>
        <dbReference type="HAMAP-Rule" id="MF_00101"/>
    </source>
</evidence>
<keyword id="KW-0963">Cytoplasm</keyword>
<keyword id="KW-0275">Fatty acid biosynthesis</keyword>
<keyword id="KW-0276">Fatty acid metabolism</keyword>
<keyword id="KW-0444">Lipid biosynthesis</keyword>
<keyword id="KW-0443">Lipid metabolism</keyword>
<keyword id="KW-0460">Magnesium</keyword>
<keyword id="KW-0479">Metal-binding</keyword>
<keyword id="KW-0808">Transferase</keyword>